<protein>
    <recommendedName>
        <fullName evidence="3">Protein unc-45 homolog B</fullName>
        <shortName evidence="3">Unc-45B</shortName>
    </recommendedName>
</protein>
<gene>
    <name evidence="7" type="primary">unc45b</name>
    <name evidence="3" type="synonym">cmya4</name>
</gene>
<evidence type="ECO:0000250" key="1">
    <source>
        <dbReference type="UniProtKB" id="D7REX8"/>
    </source>
</evidence>
<evidence type="ECO:0000250" key="2">
    <source>
        <dbReference type="UniProtKB" id="Q6DGE9"/>
    </source>
</evidence>
<evidence type="ECO:0000250" key="3">
    <source>
        <dbReference type="UniProtKB" id="Q8CGY6"/>
    </source>
</evidence>
<evidence type="ECO:0000250" key="4">
    <source>
        <dbReference type="UniProtKB" id="Q8IWX7"/>
    </source>
</evidence>
<evidence type="ECO:0000255" key="5"/>
<evidence type="ECO:0000312" key="6">
    <source>
        <dbReference type="EMBL" id="AAH79980.1"/>
    </source>
</evidence>
<evidence type="ECO:0000312" key="7">
    <source>
        <dbReference type="Xenbase" id="XB-GENE-971733"/>
    </source>
</evidence>
<comment type="function">
    <text evidence="1 2 3">Acts as a co-chaperone for HSP90 and is required for proper folding of the myosin motor domain. Plays a role in sarcomere formation during muscle cell assembly (By similarity). Is necessary for normal early lens development.</text>
</comment>
<comment type="subcellular location">
    <subcellularLocation>
        <location evidence="2">Cytoplasm</location>
        <location evidence="2">Myofibril</location>
        <location evidence="2">Sarcomere</location>
        <location evidence="2">Z line</location>
    </subcellularLocation>
    <subcellularLocation>
        <location evidence="4">Cytoplasm</location>
        <location evidence="4">Myofibril</location>
        <location evidence="4">Sarcomere</location>
        <location evidence="4">A band</location>
    </subcellularLocation>
    <subcellularLocation>
        <location evidence="2">Cytoplasm</location>
        <location evidence="2">Perinuclear region</location>
    </subcellularLocation>
    <subcellularLocation>
        <location evidence="3">Cytoplasm</location>
        <location evidence="3">Cytosol</location>
    </subcellularLocation>
    <text evidence="2">Expressed at the Z line and in the perinuclear region of myofibrils. Translocates to the A band in response to stress conditions and fibril damage.</text>
</comment>
<sequence>MEDPVQLKEEGNKYFQSNDYGNAIECYSKALKLITDKKMKAVLYRNRSACYLKQENYIQAAADASKAIDVDASDIKALFRRCQALEKLGKLDQAYKDVQRCATLEPKNRTFLEMLHRLGSNIQEKLHVQFSTDSRVQKMFEILLDENSDKEKREKAANNLIVLGREDAGAERIFQNNGVNLLMQLIETKDPELILSAVRTLSGMCTGHRARATAIVHLVGINKICSIMAVDHEEIALAACNLLQNIVDSLTGEDKKVHGKEEALVLDTKKDLKVITTHLLDMLVSKKVSGHGRDQALNLLNKNIPRYDLKNKDNSKTLFVVDVGLKKILKVLGQVPELPNCLPLTPNTRLNASVLINKLYDDLRCDPERDDFRKICEEYITGSFDPKDMEKNLHAIQTVSGILQGPFDLGNILLGMQGVMEMMVALTGSEKEVDQLVAVEALIHASTKLSRASFIITNGVSLLKDIYKKTKNEKIKIRALVGLCKLGSAGGTDYALRQFAEGSTDKLAKQCRKWLCNTSLDIQTRKWAVEGLAYLTLDADVKDEFVEDEQSLKAMFELCKTSDKTILYSVATTLVNCTNSYDVKEVIPEMVQLAKFSKQHVPEQHPKDKKDFVLKRVKKLLQADVISALSCMVKADNSILTDQTKEQIARVFLALCDEPKDRGIIVAQGGGKAMIPLALEGTDVGKTKASHGLAKIAAVSNPDIAFPGERVYEVVRPLVSLLNTERDGVQNFEALLALTNLSGKSDKLRQKIVKEKALPEIENYMFENHEQIRQAATECMCNLAVNKEVKERFTAEGNDRLKLIVLLCGEDEEVKLQRAAAGTLAILTAAEKKLCHKMTEVTSQWLEILQRLCLNEDLQVQHRGVVITYNLISAEKELAKKLVESEMLEILTVIGKQADVPNKQHIINVAREALVKCLDYGFIKTVS</sequence>
<organism>
    <name type="scientific">Xenopus laevis</name>
    <name type="common">African clawed frog</name>
    <dbReference type="NCBI Taxonomy" id="8355"/>
    <lineage>
        <taxon>Eukaryota</taxon>
        <taxon>Metazoa</taxon>
        <taxon>Chordata</taxon>
        <taxon>Craniata</taxon>
        <taxon>Vertebrata</taxon>
        <taxon>Euteleostomi</taxon>
        <taxon>Amphibia</taxon>
        <taxon>Batrachia</taxon>
        <taxon>Anura</taxon>
        <taxon>Pipoidea</taxon>
        <taxon>Pipidae</taxon>
        <taxon>Xenopodinae</taxon>
        <taxon>Xenopus</taxon>
        <taxon>Xenopus</taxon>
    </lineage>
</organism>
<feature type="chain" id="PRO_0000410948" description="Protein unc-45 homolog B">
    <location>
        <begin position="1"/>
        <end position="927"/>
    </location>
</feature>
<feature type="repeat" description="TPR 1" evidence="5">
    <location>
        <begin position="4"/>
        <end position="37"/>
    </location>
</feature>
<feature type="repeat" description="TPR 2" evidence="5">
    <location>
        <begin position="41"/>
        <end position="74"/>
    </location>
</feature>
<feature type="repeat" description="TPR 3" evidence="5">
    <location>
        <begin position="76"/>
        <end position="108"/>
    </location>
</feature>
<feature type="repeat" description="ARM 1" evidence="5">
    <location>
        <begin position="167"/>
        <end position="206"/>
    </location>
</feature>
<feature type="repeat" description="ARM 2" evidence="5">
    <location>
        <begin position="209"/>
        <end position="248"/>
    </location>
</feature>
<feature type="repeat" description="ARM 3" evidence="5">
    <location>
        <begin position="746"/>
        <end position="785"/>
    </location>
</feature>
<accession>Q68F64</accession>
<dbReference type="EMBL" id="BC079980">
    <property type="protein sequence ID" value="AAH79980.1"/>
    <property type="molecule type" value="mRNA"/>
</dbReference>
<dbReference type="RefSeq" id="NP_001087472.1">
    <property type="nucleotide sequence ID" value="NM_001094003.1"/>
</dbReference>
<dbReference type="SMR" id="Q68F64"/>
<dbReference type="DNASU" id="447296"/>
<dbReference type="GeneID" id="447296"/>
<dbReference type="KEGG" id="xla:447296"/>
<dbReference type="AGR" id="Xenbase:XB-GENE-971733"/>
<dbReference type="CTD" id="447296"/>
<dbReference type="Xenbase" id="XB-GENE-971733">
    <property type="gene designation" value="unc45b.S"/>
</dbReference>
<dbReference type="OMA" id="DTQTRRW"/>
<dbReference type="OrthoDB" id="199930at2759"/>
<dbReference type="Proteomes" id="UP000186698">
    <property type="component" value="Chromosome 2S"/>
</dbReference>
<dbReference type="Bgee" id="447296">
    <property type="expression patterns" value="Expressed in muscle tissue and 9 other cell types or tissues"/>
</dbReference>
<dbReference type="GO" id="GO:0031672">
    <property type="term" value="C:A band"/>
    <property type="evidence" value="ECO:0007669"/>
    <property type="project" value="UniProtKB-SubCell"/>
</dbReference>
<dbReference type="GO" id="GO:0005737">
    <property type="term" value="C:cytoplasm"/>
    <property type="evidence" value="ECO:0000318"/>
    <property type="project" value="GO_Central"/>
</dbReference>
<dbReference type="GO" id="GO:0005829">
    <property type="term" value="C:cytosol"/>
    <property type="evidence" value="ECO:0007669"/>
    <property type="project" value="UniProtKB-SubCell"/>
</dbReference>
<dbReference type="GO" id="GO:0048471">
    <property type="term" value="C:perinuclear region of cytoplasm"/>
    <property type="evidence" value="ECO:0007669"/>
    <property type="project" value="UniProtKB-SubCell"/>
</dbReference>
<dbReference type="GO" id="GO:0030018">
    <property type="term" value="C:Z disc"/>
    <property type="evidence" value="ECO:0007669"/>
    <property type="project" value="UniProtKB-SubCell"/>
</dbReference>
<dbReference type="GO" id="GO:0051879">
    <property type="term" value="F:Hsp90 protein binding"/>
    <property type="evidence" value="ECO:0000318"/>
    <property type="project" value="GO_Central"/>
</dbReference>
<dbReference type="GO" id="GO:0030154">
    <property type="term" value="P:cell differentiation"/>
    <property type="evidence" value="ECO:0007669"/>
    <property type="project" value="UniProtKB-KW"/>
</dbReference>
<dbReference type="GO" id="GO:0061077">
    <property type="term" value="P:chaperone-mediated protein folding"/>
    <property type="evidence" value="ECO:0000318"/>
    <property type="project" value="GO_Central"/>
</dbReference>
<dbReference type="GO" id="GO:0002088">
    <property type="term" value="P:lens development in camera-type eye"/>
    <property type="evidence" value="ECO:0000250"/>
    <property type="project" value="UniProtKB"/>
</dbReference>
<dbReference type="GO" id="GO:0007517">
    <property type="term" value="P:muscle organ development"/>
    <property type="evidence" value="ECO:0007669"/>
    <property type="project" value="UniProtKB-KW"/>
</dbReference>
<dbReference type="FunFam" id="1.25.10.10:FF:000043">
    <property type="entry name" value="Unc-45 myosin chaperone B"/>
    <property type="match status" value="1"/>
</dbReference>
<dbReference type="FunFam" id="1.25.10.10:FF:000153">
    <property type="entry name" value="Unc-45 myosin chaperone B"/>
    <property type="match status" value="1"/>
</dbReference>
<dbReference type="FunFam" id="1.25.40.10:FF:000025">
    <property type="entry name" value="Unc-45 myosin chaperone B"/>
    <property type="match status" value="1"/>
</dbReference>
<dbReference type="Gene3D" id="1.25.10.10">
    <property type="entry name" value="Leucine-rich Repeat Variant"/>
    <property type="match status" value="2"/>
</dbReference>
<dbReference type="Gene3D" id="1.25.40.10">
    <property type="entry name" value="Tetratricopeptide repeat domain"/>
    <property type="match status" value="1"/>
</dbReference>
<dbReference type="InterPro" id="IPR011989">
    <property type="entry name" value="ARM-like"/>
</dbReference>
<dbReference type="InterPro" id="IPR016024">
    <property type="entry name" value="ARM-type_fold"/>
</dbReference>
<dbReference type="InterPro" id="IPR000225">
    <property type="entry name" value="Armadillo"/>
</dbReference>
<dbReference type="InterPro" id="IPR011990">
    <property type="entry name" value="TPR-like_helical_dom_sf"/>
</dbReference>
<dbReference type="InterPro" id="IPR019734">
    <property type="entry name" value="TPR_rpt"/>
</dbReference>
<dbReference type="InterPro" id="IPR024660">
    <property type="entry name" value="UCS_central_dom"/>
</dbReference>
<dbReference type="PANTHER" id="PTHR45994">
    <property type="entry name" value="FI21225P1"/>
    <property type="match status" value="1"/>
</dbReference>
<dbReference type="PANTHER" id="PTHR45994:SF2">
    <property type="entry name" value="PROTEIN UNC-45 HOMOLOG B"/>
    <property type="match status" value="1"/>
</dbReference>
<dbReference type="Pfam" id="PF13181">
    <property type="entry name" value="TPR_8"/>
    <property type="match status" value="1"/>
</dbReference>
<dbReference type="Pfam" id="PF11701">
    <property type="entry name" value="UNC45-central"/>
    <property type="match status" value="1"/>
</dbReference>
<dbReference type="SMART" id="SM00185">
    <property type="entry name" value="ARM"/>
    <property type="match status" value="5"/>
</dbReference>
<dbReference type="SMART" id="SM00028">
    <property type="entry name" value="TPR"/>
    <property type="match status" value="3"/>
</dbReference>
<dbReference type="SUPFAM" id="SSF48371">
    <property type="entry name" value="ARM repeat"/>
    <property type="match status" value="2"/>
</dbReference>
<dbReference type="SUPFAM" id="SSF48452">
    <property type="entry name" value="TPR-like"/>
    <property type="match status" value="1"/>
</dbReference>
<dbReference type="PROSITE" id="PS50005">
    <property type="entry name" value="TPR"/>
    <property type="match status" value="3"/>
</dbReference>
<dbReference type="PROSITE" id="PS50293">
    <property type="entry name" value="TPR_REGION"/>
    <property type="match status" value="1"/>
</dbReference>
<keyword id="KW-0143">Chaperone</keyword>
<keyword id="KW-0963">Cytoplasm</keyword>
<keyword id="KW-0217">Developmental protein</keyword>
<keyword id="KW-0221">Differentiation</keyword>
<keyword id="KW-0517">Myogenesis</keyword>
<keyword id="KW-1185">Reference proteome</keyword>
<keyword id="KW-0677">Repeat</keyword>
<keyword id="KW-0802">TPR repeat</keyword>
<name>UN45B_XENLA</name>
<proteinExistence type="evidence at transcript level"/>
<reference evidence="6" key="1">
    <citation type="submission" date="2004-08" db="EMBL/GenBank/DDBJ databases">
        <authorList>
            <consortium name="NIH - Xenopus Gene Collection (XGC) project"/>
        </authorList>
    </citation>
    <scope>NUCLEOTIDE SEQUENCE [LARGE SCALE MRNA]</scope>
    <source>
        <tissue evidence="6">Embryo</tissue>
    </source>
</reference>